<organism>
    <name type="scientific">Photorhabdus laumondii subsp. laumondii (strain DSM 15139 / CIP 105565 / TT01)</name>
    <name type="common">Photorhabdus luminescens subsp. laumondii</name>
    <dbReference type="NCBI Taxonomy" id="243265"/>
    <lineage>
        <taxon>Bacteria</taxon>
        <taxon>Pseudomonadati</taxon>
        <taxon>Pseudomonadota</taxon>
        <taxon>Gammaproteobacteria</taxon>
        <taxon>Enterobacterales</taxon>
        <taxon>Morganellaceae</taxon>
        <taxon>Photorhabdus</taxon>
    </lineage>
</organism>
<protein>
    <recommendedName>
        <fullName evidence="1">DNA-directed RNA polymerase subunit beta'</fullName>
        <shortName evidence="1">RNAP subunit beta'</shortName>
        <ecNumber evidence="1">2.7.7.6</ecNumber>
    </recommendedName>
    <alternativeName>
        <fullName evidence="1">RNA polymerase subunit beta'</fullName>
    </alternativeName>
    <alternativeName>
        <fullName evidence="1">Transcriptase subunit beta'</fullName>
    </alternativeName>
</protein>
<keyword id="KW-0240">DNA-directed RNA polymerase</keyword>
<keyword id="KW-0460">Magnesium</keyword>
<keyword id="KW-0479">Metal-binding</keyword>
<keyword id="KW-0548">Nucleotidyltransferase</keyword>
<keyword id="KW-1185">Reference proteome</keyword>
<keyword id="KW-0804">Transcription</keyword>
<keyword id="KW-0808">Transferase</keyword>
<keyword id="KW-0862">Zinc</keyword>
<evidence type="ECO:0000255" key="1">
    <source>
        <dbReference type="HAMAP-Rule" id="MF_01322"/>
    </source>
</evidence>
<name>RPOC_PHOLL</name>
<sequence>MKDLLKFLKAQTKTEEFDAIKIALASPDMIRSWSFGEVKKPETINYRTFKPERDGLFCARIFGPVKDYECLCGKYKRLKHRGVICEKCGVEVTQTKVRRERMGHIELASPTAHIWFLKSLPSRIGLLLDMPLRDIERVLYFESYVVVEGGMTSLERSQILTEEQYLDALEEFGDEFDAKMGAEAIQSLLKNLDLENECETLREELNETNSETKRKKLTKRIKLLEAFIQSGNKPEWMVLTVLPVLPPDLRPLVPLDGGRFATSDLNDLYRRVINRNNRLKRLLDLAAPDIIVRNEKRMLQEAVDALLDNGRRGRAITGSNKRPLKSLADMIKGKQGRFRQNLLGKRVDYSGRSVITVGPYLRLHQCGLPKKMALELFKPFIYGKLELRGLATTIKAAKKMVEREEAVVWDILDEVIREHPVLLNRAPTLHRLGIQAFEPVLIEGKAIQLHPLVCAAYNADFDGDQMAVHVPLTLEAQLEARALMMSTNNILSPASGEPIIVPSQDVVLGLYYMTRDCVNAKGEGMVLTGPKEAERVYRAGLASLHARVKVRITEEVKDGEGNITTNTGLVDTTIGRAILWMIVPRGLPYSLVNQPLGKKAISRMLNTCYRVMGLKPTVIFADQIMYTGFAYAARSGASVGIDDMVIPEKKAGIIAEAEAEVAEIQEQFQSGLVTAGERYNKVIDIWAAANERVAKAMMENLSTETVTNRDGEEEQQVSFNSIFMMADSGARGSAAQIRQLAGMRGLMAKPDGSIIETPITANFREGLNVLQYFISTHGARKGLADTALKTANSGYLTRRLVDVAQDLVVTEDDCGTHDGILMTPVIEGGDVKEPLRERVLGRVTAEDVLKPGTADILVPRNTLLNEKWCDLLEESSVDSIKVRSVVSCETDFGVCANCYGRDLARGHIINKGEAVGVIAAQSIGEPGTQLTMRTFHIGGAASRAAAESSIQVRNKGSLKLFNAKSVTNSAGKLVITSRNTELCLIDEFGRTKESYKVPYGAVLGKGDGETVNGGETVANWDPHTMPVVSEVSGIIRFADMIDGQTITRQTDELTGLSSLVVLDSAERTGSGKDLRPALKIVDAKGDDVLIPGTDMPAQYFLPGKAIVQLDDGVSISAGDTLARIPQESGGTKDITGGLPRVADLFEARRPKEPAILAEVSGIVSFGKETKGKRRLVISPLDGGDAYEEMIPKWRQLNVFEGEVVERGDVISDGPESPHDILRLRGVHAVTRYITNEVQEVYRLQGVKINDKHIEVIVRQMLRKATIESAGSSEFLEGEQVEYARVKVANRKLEQEGKVAATYGRDLLGITKASLATESFISAASFQETTRVLTEAAVAGKRDELRGLKENVIVGRLIPAGTGYAYHQDRIRRRQLNEPAEAPQVSVDEATANLAELLNAGFGGDKK</sequence>
<reference key="1">
    <citation type="journal article" date="2003" name="Nat. Biotechnol.">
        <title>The genome sequence of the entomopathogenic bacterium Photorhabdus luminescens.</title>
        <authorList>
            <person name="Duchaud E."/>
            <person name="Rusniok C."/>
            <person name="Frangeul L."/>
            <person name="Buchrieser C."/>
            <person name="Givaudan A."/>
            <person name="Taourit S."/>
            <person name="Bocs S."/>
            <person name="Boursaux-Eude C."/>
            <person name="Chandler M."/>
            <person name="Charles J.-F."/>
            <person name="Dassa E."/>
            <person name="Derose R."/>
            <person name="Derzelle S."/>
            <person name="Freyssinet G."/>
            <person name="Gaudriault S."/>
            <person name="Medigue C."/>
            <person name="Lanois A."/>
            <person name="Powell K."/>
            <person name="Siguier P."/>
            <person name="Vincent R."/>
            <person name="Wingate V."/>
            <person name="Zouine M."/>
            <person name="Glaser P."/>
            <person name="Boemare N."/>
            <person name="Danchin A."/>
            <person name="Kunst F."/>
        </authorList>
    </citation>
    <scope>NUCLEOTIDE SEQUENCE [LARGE SCALE GENOMIC DNA]</scope>
    <source>
        <strain>DSM 15139 / CIP 105565 / TT01</strain>
    </source>
</reference>
<proteinExistence type="inferred from homology"/>
<comment type="function">
    <text evidence="1">DNA-dependent RNA polymerase catalyzes the transcription of DNA into RNA using the four ribonucleoside triphosphates as substrates.</text>
</comment>
<comment type="catalytic activity">
    <reaction evidence="1">
        <text>RNA(n) + a ribonucleoside 5'-triphosphate = RNA(n+1) + diphosphate</text>
        <dbReference type="Rhea" id="RHEA:21248"/>
        <dbReference type="Rhea" id="RHEA-COMP:14527"/>
        <dbReference type="Rhea" id="RHEA-COMP:17342"/>
        <dbReference type="ChEBI" id="CHEBI:33019"/>
        <dbReference type="ChEBI" id="CHEBI:61557"/>
        <dbReference type="ChEBI" id="CHEBI:140395"/>
        <dbReference type="EC" id="2.7.7.6"/>
    </reaction>
</comment>
<comment type="cofactor">
    <cofactor evidence="1">
        <name>Mg(2+)</name>
        <dbReference type="ChEBI" id="CHEBI:18420"/>
    </cofactor>
    <text evidence="1">Binds 1 Mg(2+) ion per subunit.</text>
</comment>
<comment type="cofactor">
    <cofactor evidence="1">
        <name>Zn(2+)</name>
        <dbReference type="ChEBI" id="CHEBI:29105"/>
    </cofactor>
    <text evidence="1">Binds 2 Zn(2+) ions per subunit.</text>
</comment>
<comment type="subunit">
    <text evidence="1">The RNAP catalytic core consists of 2 alpha, 1 beta, 1 beta' and 1 omega subunit. When a sigma factor is associated with the core the holoenzyme is formed, which can initiate transcription.</text>
</comment>
<comment type="similarity">
    <text evidence="1">Belongs to the RNA polymerase beta' chain family.</text>
</comment>
<gene>
    <name evidence="1" type="primary">rpoC</name>
    <name type="ordered locus">plu0440</name>
</gene>
<dbReference type="EC" id="2.7.7.6" evidence="1"/>
<dbReference type="EMBL" id="BX571860">
    <property type="protein sequence ID" value="CAE12735.1"/>
    <property type="molecule type" value="Genomic_DNA"/>
</dbReference>
<dbReference type="RefSeq" id="WP_011144826.1">
    <property type="nucleotide sequence ID" value="NC_005126.1"/>
</dbReference>
<dbReference type="SMR" id="Q7N9A3"/>
<dbReference type="STRING" id="243265.plu0440"/>
<dbReference type="GeneID" id="48846726"/>
<dbReference type="KEGG" id="plu:plu0440"/>
<dbReference type="eggNOG" id="COG0086">
    <property type="taxonomic scope" value="Bacteria"/>
</dbReference>
<dbReference type="HOGENOM" id="CLU_000524_3_1_6"/>
<dbReference type="OrthoDB" id="9815296at2"/>
<dbReference type="Proteomes" id="UP000002514">
    <property type="component" value="Chromosome"/>
</dbReference>
<dbReference type="GO" id="GO:0000428">
    <property type="term" value="C:DNA-directed RNA polymerase complex"/>
    <property type="evidence" value="ECO:0007669"/>
    <property type="project" value="UniProtKB-KW"/>
</dbReference>
<dbReference type="GO" id="GO:0003677">
    <property type="term" value="F:DNA binding"/>
    <property type="evidence" value="ECO:0007669"/>
    <property type="project" value="UniProtKB-UniRule"/>
</dbReference>
<dbReference type="GO" id="GO:0003899">
    <property type="term" value="F:DNA-directed RNA polymerase activity"/>
    <property type="evidence" value="ECO:0007669"/>
    <property type="project" value="UniProtKB-UniRule"/>
</dbReference>
<dbReference type="GO" id="GO:0000287">
    <property type="term" value="F:magnesium ion binding"/>
    <property type="evidence" value="ECO:0007669"/>
    <property type="project" value="UniProtKB-UniRule"/>
</dbReference>
<dbReference type="GO" id="GO:0008270">
    <property type="term" value="F:zinc ion binding"/>
    <property type="evidence" value="ECO:0007669"/>
    <property type="project" value="UniProtKB-UniRule"/>
</dbReference>
<dbReference type="GO" id="GO:0006351">
    <property type="term" value="P:DNA-templated transcription"/>
    <property type="evidence" value="ECO:0007669"/>
    <property type="project" value="UniProtKB-UniRule"/>
</dbReference>
<dbReference type="CDD" id="cd02655">
    <property type="entry name" value="RNAP_beta'_C"/>
    <property type="match status" value="1"/>
</dbReference>
<dbReference type="CDD" id="cd01609">
    <property type="entry name" value="RNAP_beta'_N"/>
    <property type="match status" value="1"/>
</dbReference>
<dbReference type="FunFam" id="1.10.132.30:FF:000003">
    <property type="entry name" value="DNA-directed RNA polymerase subunit beta"/>
    <property type="match status" value="1"/>
</dbReference>
<dbReference type="FunFam" id="1.10.150.390:FF:000002">
    <property type="entry name" value="DNA-directed RNA polymerase subunit beta"/>
    <property type="match status" value="1"/>
</dbReference>
<dbReference type="FunFam" id="1.10.274.100:FF:000002">
    <property type="entry name" value="DNA-directed RNA polymerase subunit beta"/>
    <property type="match status" value="1"/>
</dbReference>
<dbReference type="FunFam" id="1.10.40.90:FF:000001">
    <property type="entry name" value="DNA-directed RNA polymerase subunit beta"/>
    <property type="match status" value="1"/>
</dbReference>
<dbReference type="FunFam" id="2.40.50.100:FF:000012">
    <property type="entry name" value="DNA-directed RNA polymerase subunit beta"/>
    <property type="match status" value="1"/>
</dbReference>
<dbReference type="FunFam" id="2.40.50.100:FF:000016">
    <property type="entry name" value="DNA-directed RNA polymerase subunit beta"/>
    <property type="match status" value="1"/>
</dbReference>
<dbReference type="FunFam" id="2.40.50.100:FF:000019">
    <property type="entry name" value="DNA-directed RNA polymerase subunit beta"/>
    <property type="match status" value="1"/>
</dbReference>
<dbReference type="FunFam" id="4.10.860.120:FF:000001">
    <property type="entry name" value="DNA-directed RNA polymerase subunit beta"/>
    <property type="match status" value="1"/>
</dbReference>
<dbReference type="Gene3D" id="1.10.132.30">
    <property type="match status" value="1"/>
</dbReference>
<dbReference type="Gene3D" id="1.10.150.390">
    <property type="match status" value="1"/>
</dbReference>
<dbReference type="Gene3D" id="1.10.1790.20">
    <property type="match status" value="1"/>
</dbReference>
<dbReference type="Gene3D" id="1.10.40.90">
    <property type="match status" value="1"/>
</dbReference>
<dbReference type="Gene3D" id="2.40.40.20">
    <property type="match status" value="1"/>
</dbReference>
<dbReference type="Gene3D" id="2.40.50.100">
    <property type="match status" value="3"/>
</dbReference>
<dbReference type="Gene3D" id="4.10.860.120">
    <property type="entry name" value="RNA polymerase II, clamp domain"/>
    <property type="match status" value="1"/>
</dbReference>
<dbReference type="Gene3D" id="1.10.274.100">
    <property type="entry name" value="RNA polymerase Rpb1, domain 3"/>
    <property type="match status" value="1"/>
</dbReference>
<dbReference type="HAMAP" id="MF_01322">
    <property type="entry name" value="RNApol_bact_RpoC"/>
    <property type="match status" value="1"/>
</dbReference>
<dbReference type="InterPro" id="IPR045867">
    <property type="entry name" value="DNA-dir_RpoC_beta_prime"/>
</dbReference>
<dbReference type="InterPro" id="IPR012754">
    <property type="entry name" value="DNA-dir_RpoC_beta_prime_bact"/>
</dbReference>
<dbReference type="InterPro" id="IPR000722">
    <property type="entry name" value="RNA_pol_asu"/>
</dbReference>
<dbReference type="InterPro" id="IPR006592">
    <property type="entry name" value="RNA_pol_N"/>
</dbReference>
<dbReference type="InterPro" id="IPR007080">
    <property type="entry name" value="RNA_pol_Rpb1_1"/>
</dbReference>
<dbReference type="InterPro" id="IPR007066">
    <property type="entry name" value="RNA_pol_Rpb1_3"/>
</dbReference>
<dbReference type="InterPro" id="IPR042102">
    <property type="entry name" value="RNA_pol_Rpb1_3_sf"/>
</dbReference>
<dbReference type="InterPro" id="IPR007083">
    <property type="entry name" value="RNA_pol_Rpb1_4"/>
</dbReference>
<dbReference type="InterPro" id="IPR007081">
    <property type="entry name" value="RNA_pol_Rpb1_5"/>
</dbReference>
<dbReference type="InterPro" id="IPR044893">
    <property type="entry name" value="RNA_pol_Rpb1_clamp_domain"/>
</dbReference>
<dbReference type="InterPro" id="IPR038120">
    <property type="entry name" value="Rpb1_funnel_sf"/>
</dbReference>
<dbReference type="NCBIfam" id="TIGR02386">
    <property type="entry name" value="rpoC_TIGR"/>
    <property type="match status" value="1"/>
</dbReference>
<dbReference type="PANTHER" id="PTHR19376">
    <property type="entry name" value="DNA-DIRECTED RNA POLYMERASE"/>
    <property type="match status" value="1"/>
</dbReference>
<dbReference type="PANTHER" id="PTHR19376:SF54">
    <property type="entry name" value="DNA-DIRECTED RNA POLYMERASE SUBUNIT BETA"/>
    <property type="match status" value="1"/>
</dbReference>
<dbReference type="Pfam" id="PF04997">
    <property type="entry name" value="RNA_pol_Rpb1_1"/>
    <property type="match status" value="1"/>
</dbReference>
<dbReference type="Pfam" id="PF00623">
    <property type="entry name" value="RNA_pol_Rpb1_2"/>
    <property type="match status" value="2"/>
</dbReference>
<dbReference type="Pfam" id="PF04983">
    <property type="entry name" value="RNA_pol_Rpb1_3"/>
    <property type="match status" value="1"/>
</dbReference>
<dbReference type="Pfam" id="PF05000">
    <property type="entry name" value="RNA_pol_Rpb1_4"/>
    <property type="match status" value="1"/>
</dbReference>
<dbReference type="Pfam" id="PF04998">
    <property type="entry name" value="RNA_pol_Rpb1_5"/>
    <property type="match status" value="1"/>
</dbReference>
<dbReference type="SMART" id="SM00663">
    <property type="entry name" value="RPOLA_N"/>
    <property type="match status" value="1"/>
</dbReference>
<dbReference type="SUPFAM" id="SSF64484">
    <property type="entry name" value="beta and beta-prime subunits of DNA dependent RNA-polymerase"/>
    <property type="match status" value="1"/>
</dbReference>
<feature type="chain" id="PRO_0000067774" description="DNA-directed RNA polymerase subunit beta'">
    <location>
        <begin position="1"/>
        <end position="1406"/>
    </location>
</feature>
<feature type="binding site" evidence="1">
    <location>
        <position position="70"/>
    </location>
    <ligand>
        <name>Zn(2+)</name>
        <dbReference type="ChEBI" id="CHEBI:29105"/>
        <label>1</label>
    </ligand>
</feature>
<feature type="binding site" evidence="1">
    <location>
        <position position="72"/>
    </location>
    <ligand>
        <name>Zn(2+)</name>
        <dbReference type="ChEBI" id="CHEBI:29105"/>
        <label>1</label>
    </ligand>
</feature>
<feature type="binding site" evidence="1">
    <location>
        <position position="85"/>
    </location>
    <ligand>
        <name>Zn(2+)</name>
        <dbReference type="ChEBI" id="CHEBI:29105"/>
        <label>1</label>
    </ligand>
</feature>
<feature type="binding site" evidence="1">
    <location>
        <position position="88"/>
    </location>
    <ligand>
        <name>Zn(2+)</name>
        <dbReference type="ChEBI" id="CHEBI:29105"/>
        <label>1</label>
    </ligand>
</feature>
<feature type="binding site" evidence="1">
    <location>
        <position position="460"/>
    </location>
    <ligand>
        <name>Mg(2+)</name>
        <dbReference type="ChEBI" id="CHEBI:18420"/>
    </ligand>
</feature>
<feature type="binding site" evidence="1">
    <location>
        <position position="462"/>
    </location>
    <ligand>
        <name>Mg(2+)</name>
        <dbReference type="ChEBI" id="CHEBI:18420"/>
    </ligand>
</feature>
<feature type="binding site" evidence="1">
    <location>
        <position position="464"/>
    </location>
    <ligand>
        <name>Mg(2+)</name>
        <dbReference type="ChEBI" id="CHEBI:18420"/>
    </ligand>
</feature>
<feature type="binding site" evidence="1">
    <location>
        <position position="814"/>
    </location>
    <ligand>
        <name>Zn(2+)</name>
        <dbReference type="ChEBI" id="CHEBI:29105"/>
        <label>2</label>
    </ligand>
</feature>
<feature type="binding site" evidence="1">
    <location>
        <position position="888"/>
    </location>
    <ligand>
        <name>Zn(2+)</name>
        <dbReference type="ChEBI" id="CHEBI:29105"/>
        <label>2</label>
    </ligand>
</feature>
<feature type="binding site" evidence="1">
    <location>
        <position position="895"/>
    </location>
    <ligand>
        <name>Zn(2+)</name>
        <dbReference type="ChEBI" id="CHEBI:29105"/>
        <label>2</label>
    </ligand>
</feature>
<feature type="binding site" evidence="1">
    <location>
        <position position="898"/>
    </location>
    <ligand>
        <name>Zn(2+)</name>
        <dbReference type="ChEBI" id="CHEBI:29105"/>
        <label>2</label>
    </ligand>
</feature>
<accession>Q7N9A3</accession>